<accession>Q47GS9</accession>
<dbReference type="EC" id="2.3.2.6" evidence="1"/>
<dbReference type="EMBL" id="CP000089">
    <property type="protein sequence ID" value="AAZ45952.1"/>
    <property type="molecule type" value="Genomic_DNA"/>
</dbReference>
<dbReference type="SMR" id="Q47GS9"/>
<dbReference type="STRING" id="159087.Daro_1196"/>
<dbReference type="KEGG" id="dar:Daro_1196"/>
<dbReference type="eggNOG" id="COG2360">
    <property type="taxonomic scope" value="Bacteria"/>
</dbReference>
<dbReference type="HOGENOM" id="CLU_075045_0_0_4"/>
<dbReference type="OrthoDB" id="9790282at2"/>
<dbReference type="GO" id="GO:0005737">
    <property type="term" value="C:cytoplasm"/>
    <property type="evidence" value="ECO:0007669"/>
    <property type="project" value="UniProtKB-SubCell"/>
</dbReference>
<dbReference type="GO" id="GO:0008914">
    <property type="term" value="F:leucyl-tRNA--protein transferase activity"/>
    <property type="evidence" value="ECO:0007669"/>
    <property type="project" value="UniProtKB-UniRule"/>
</dbReference>
<dbReference type="GO" id="GO:0030163">
    <property type="term" value="P:protein catabolic process"/>
    <property type="evidence" value="ECO:0007669"/>
    <property type="project" value="UniProtKB-UniRule"/>
</dbReference>
<dbReference type="Gene3D" id="3.40.630.70">
    <property type="entry name" value="Leucyl/phenylalanyl-tRNA-protein transferase, C-terminal domain"/>
    <property type="match status" value="1"/>
</dbReference>
<dbReference type="Gene3D" id="3.30.70.3550">
    <property type="entry name" value="Leucyl/phenylalanyl-tRNA-protein transferase, N-terminal domain"/>
    <property type="match status" value="1"/>
</dbReference>
<dbReference type="HAMAP" id="MF_00688">
    <property type="entry name" value="Leu_Phe_trans"/>
    <property type="match status" value="1"/>
</dbReference>
<dbReference type="InterPro" id="IPR016181">
    <property type="entry name" value="Acyl_CoA_acyltransferase"/>
</dbReference>
<dbReference type="InterPro" id="IPR004616">
    <property type="entry name" value="Leu/Phe-tRNA_Trfase"/>
</dbReference>
<dbReference type="InterPro" id="IPR042203">
    <property type="entry name" value="Leu/Phe-tRNA_Trfase_C"/>
</dbReference>
<dbReference type="InterPro" id="IPR042221">
    <property type="entry name" value="Leu/Phe-tRNA_Trfase_N"/>
</dbReference>
<dbReference type="NCBIfam" id="TIGR00667">
    <property type="entry name" value="aat"/>
    <property type="match status" value="1"/>
</dbReference>
<dbReference type="PANTHER" id="PTHR30098">
    <property type="entry name" value="LEUCYL/PHENYLALANYL-TRNA--PROTEIN TRANSFERASE"/>
    <property type="match status" value="1"/>
</dbReference>
<dbReference type="PANTHER" id="PTHR30098:SF2">
    <property type="entry name" value="LEUCYL_PHENYLALANYL-TRNA--PROTEIN TRANSFERASE"/>
    <property type="match status" value="1"/>
</dbReference>
<dbReference type="Pfam" id="PF03588">
    <property type="entry name" value="Leu_Phe_trans"/>
    <property type="match status" value="1"/>
</dbReference>
<dbReference type="SUPFAM" id="SSF55729">
    <property type="entry name" value="Acyl-CoA N-acyltransferases (Nat)"/>
    <property type="match status" value="1"/>
</dbReference>
<reference key="1">
    <citation type="journal article" date="2009" name="BMC Genomics">
        <title>Metabolic analysis of the soil microbe Dechloromonas aromatica str. RCB: indications of a surprisingly complex life-style and cryptic anaerobic pathways for aromatic degradation.</title>
        <authorList>
            <person name="Salinero K.K."/>
            <person name="Keller K."/>
            <person name="Feil W.S."/>
            <person name="Feil H."/>
            <person name="Trong S."/>
            <person name="Di Bartolo G."/>
            <person name="Lapidus A."/>
        </authorList>
    </citation>
    <scope>NUCLEOTIDE SEQUENCE [LARGE SCALE GENOMIC DNA]</scope>
    <source>
        <strain>RCB</strain>
    </source>
</reference>
<protein>
    <recommendedName>
        <fullName evidence="1">Leucyl/phenylalanyl-tRNA--protein transferase</fullName>
        <ecNumber evidence="1">2.3.2.6</ecNumber>
    </recommendedName>
    <alternativeName>
        <fullName evidence="1">L/F-transferase</fullName>
    </alternativeName>
    <alternativeName>
        <fullName evidence="1">Leucyltransferase</fullName>
    </alternativeName>
    <alternativeName>
        <fullName evidence="1">Phenyalanyltransferase</fullName>
    </alternativeName>
</protein>
<feature type="chain" id="PRO_0000258056" description="Leucyl/phenylalanyl-tRNA--protein transferase">
    <location>
        <begin position="1"/>
        <end position="234"/>
    </location>
</feature>
<keyword id="KW-0012">Acyltransferase</keyword>
<keyword id="KW-0963">Cytoplasm</keyword>
<keyword id="KW-0808">Transferase</keyword>
<evidence type="ECO:0000255" key="1">
    <source>
        <dbReference type="HAMAP-Rule" id="MF_00688"/>
    </source>
</evidence>
<gene>
    <name evidence="1" type="primary">aat</name>
    <name type="ordered locus">Daro_1196</name>
</gene>
<proteinExistence type="inferred from homology"/>
<organism>
    <name type="scientific">Dechloromonas aromatica (strain RCB)</name>
    <dbReference type="NCBI Taxonomy" id="159087"/>
    <lineage>
        <taxon>Bacteria</taxon>
        <taxon>Pseudomonadati</taxon>
        <taxon>Pseudomonadota</taxon>
        <taxon>Betaproteobacteria</taxon>
        <taxon>Rhodocyclales</taxon>
        <taxon>Azonexaceae</taxon>
        <taxon>Dechloromonas</taxon>
    </lineage>
</organism>
<name>LFTR_DECAR</name>
<comment type="function">
    <text evidence="1">Functions in the N-end rule pathway of protein degradation where it conjugates Leu, Phe and, less efficiently, Met from aminoacyl-tRNAs to the N-termini of proteins containing an N-terminal arginine or lysine.</text>
</comment>
<comment type="catalytic activity">
    <reaction evidence="1">
        <text>N-terminal L-lysyl-[protein] + L-leucyl-tRNA(Leu) = N-terminal L-leucyl-L-lysyl-[protein] + tRNA(Leu) + H(+)</text>
        <dbReference type="Rhea" id="RHEA:12340"/>
        <dbReference type="Rhea" id="RHEA-COMP:9613"/>
        <dbReference type="Rhea" id="RHEA-COMP:9622"/>
        <dbReference type="Rhea" id="RHEA-COMP:12670"/>
        <dbReference type="Rhea" id="RHEA-COMP:12671"/>
        <dbReference type="ChEBI" id="CHEBI:15378"/>
        <dbReference type="ChEBI" id="CHEBI:65249"/>
        <dbReference type="ChEBI" id="CHEBI:78442"/>
        <dbReference type="ChEBI" id="CHEBI:78494"/>
        <dbReference type="ChEBI" id="CHEBI:133043"/>
        <dbReference type="EC" id="2.3.2.6"/>
    </reaction>
</comment>
<comment type="catalytic activity">
    <reaction evidence="1">
        <text>N-terminal L-arginyl-[protein] + L-leucyl-tRNA(Leu) = N-terminal L-leucyl-L-arginyl-[protein] + tRNA(Leu) + H(+)</text>
        <dbReference type="Rhea" id="RHEA:50416"/>
        <dbReference type="Rhea" id="RHEA-COMP:9613"/>
        <dbReference type="Rhea" id="RHEA-COMP:9622"/>
        <dbReference type="Rhea" id="RHEA-COMP:12672"/>
        <dbReference type="Rhea" id="RHEA-COMP:12673"/>
        <dbReference type="ChEBI" id="CHEBI:15378"/>
        <dbReference type="ChEBI" id="CHEBI:64719"/>
        <dbReference type="ChEBI" id="CHEBI:78442"/>
        <dbReference type="ChEBI" id="CHEBI:78494"/>
        <dbReference type="ChEBI" id="CHEBI:133044"/>
        <dbReference type="EC" id="2.3.2.6"/>
    </reaction>
</comment>
<comment type="catalytic activity">
    <reaction evidence="1">
        <text>L-phenylalanyl-tRNA(Phe) + an N-terminal L-alpha-aminoacyl-[protein] = an N-terminal L-phenylalanyl-L-alpha-aminoacyl-[protein] + tRNA(Phe)</text>
        <dbReference type="Rhea" id="RHEA:43632"/>
        <dbReference type="Rhea" id="RHEA-COMP:9668"/>
        <dbReference type="Rhea" id="RHEA-COMP:9699"/>
        <dbReference type="Rhea" id="RHEA-COMP:10636"/>
        <dbReference type="Rhea" id="RHEA-COMP:10637"/>
        <dbReference type="ChEBI" id="CHEBI:78442"/>
        <dbReference type="ChEBI" id="CHEBI:78531"/>
        <dbReference type="ChEBI" id="CHEBI:78597"/>
        <dbReference type="ChEBI" id="CHEBI:83561"/>
        <dbReference type="EC" id="2.3.2.6"/>
    </reaction>
</comment>
<comment type="subcellular location">
    <subcellularLocation>
        <location evidence="1">Cytoplasm</location>
    </subcellularLocation>
</comment>
<comment type="similarity">
    <text evidence="1">Belongs to the L/F-transferase family.</text>
</comment>
<sequence>MIPYLGPLDLFPPVEMAREDMGGLLAVGGDLQPDRLLDAYRRGIFPWGTVEGQPLWYSPNPRMVLFPEEFRLTRSLKKTLRSGKFEVRFDSNFRGVMANCASTPRPGQDGTWISPEMKHAYTRLHELGWAHSVETYEEGVMVGGLYGLAIGHMFYGESMFSHRTDASKVAFAHLVDYLVNNQFGMIDCQMYTDHLASLGGREIPRDAFQARLSALTASGSPRTVWSTDPLDPAR</sequence>